<proteinExistence type="evidence at protein level"/>
<accession>Q0CJ62</accession>
<accession>A0A2L0V393</accession>
<reference key="1">
    <citation type="journal article" date="2018" name="Sci. Rep.">
        <title>Heterologous pathway assembly reveals molecular steps of fungal terreic acid biosynthesis.</title>
        <authorList>
            <person name="Kong C."/>
            <person name="Huang H."/>
            <person name="Xue Y."/>
            <person name="Liu Y."/>
            <person name="Peng Q."/>
            <person name="Liu Q."/>
            <person name="Xu Q."/>
            <person name="Zhu Q."/>
            <person name="Yin Y."/>
            <person name="Zhou X."/>
            <person name="Zhang Y."/>
            <person name="Cai M."/>
        </authorList>
    </citation>
    <scope>NUCLEOTIDE SEQUENCE [MRNA]</scope>
    <scope>FUNCTION</scope>
    <scope>CATALYTIC ACTIVITY</scope>
    <scope>PATHWAY</scope>
    <source>
        <strain evidence="12">NIH 2624 / FGSC A1156</strain>
    </source>
</reference>
<reference key="2">
    <citation type="submission" date="2005-09" db="EMBL/GenBank/DDBJ databases">
        <title>Annotation of the Aspergillus terreus NIH2624 genome.</title>
        <authorList>
            <person name="Birren B.W."/>
            <person name="Lander E.S."/>
            <person name="Galagan J.E."/>
            <person name="Nusbaum C."/>
            <person name="Devon K."/>
            <person name="Henn M."/>
            <person name="Ma L.-J."/>
            <person name="Jaffe D.B."/>
            <person name="Butler J."/>
            <person name="Alvarez P."/>
            <person name="Gnerre S."/>
            <person name="Grabherr M."/>
            <person name="Kleber M."/>
            <person name="Mauceli E.W."/>
            <person name="Brockman W."/>
            <person name="Rounsley S."/>
            <person name="Young S.K."/>
            <person name="LaButti K."/>
            <person name="Pushparaj V."/>
            <person name="DeCaprio D."/>
            <person name="Crawford M."/>
            <person name="Koehrsen M."/>
            <person name="Engels R."/>
            <person name="Montgomery P."/>
            <person name="Pearson M."/>
            <person name="Howarth C."/>
            <person name="Larson L."/>
            <person name="Luoma S."/>
            <person name="White J."/>
            <person name="Alvarado L."/>
            <person name="Kodira C.D."/>
            <person name="Zeng Q."/>
            <person name="Oleary S."/>
            <person name="Yandava C."/>
            <person name="Denning D.W."/>
            <person name="Nierman W.C."/>
            <person name="Milne T."/>
            <person name="Madden K."/>
        </authorList>
    </citation>
    <scope>NUCLEOTIDE SEQUENCE [LARGE SCALE GENOMIC DNA]</scope>
    <source>
        <strain>NIH 2624 / FGSC A1156</strain>
    </source>
</reference>
<reference key="3">
    <citation type="journal article" date="1996" name="Mol. Gen. Genet.">
        <title>Cloning of the polyketide synthase gene atX from Aspergillus terreus and its identification as the 6-methylsalicylic acid synthase gene by heterologous expression.</title>
        <authorList>
            <person name="Fujii I."/>
            <person name="Ono Y."/>
            <person name="Tada H."/>
            <person name="Gomi K."/>
            <person name="Ebizuka Y."/>
            <person name="Sankawa U."/>
        </authorList>
    </citation>
    <scope>FUNCTION</scope>
</reference>
<reference key="4">
    <citation type="journal article" date="1997" name="Folia Microbiol. (Praha)">
        <title>Polyketide synthase gene pksM from Aspergillus terreus expressed during growth phase.</title>
        <authorList>
            <person name="Pazoutova S."/>
            <person name="Linka M."/>
            <person name="Storkova S."/>
            <person name="Schwab H."/>
        </authorList>
    </citation>
    <scope>FUNCTION</scope>
</reference>
<reference key="5">
    <citation type="journal article" date="1999" name="Proc. Natl. Acad. Sci. U.S.A.">
        <title>Terreic acid, a quinone epoxide inhibitor of Bruton's tyrosine kinase.</title>
        <authorList>
            <person name="Kawakami Y."/>
            <person name="Hartman S.E."/>
            <person name="Kinoshita E."/>
            <person name="Suzuki H."/>
            <person name="Kitaura J."/>
            <person name="Yao L."/>
            <person name="Inagaki N."/>
            <person name="Franco A."/>
            <person name="Hata D."/>
            <person name="Maeda-Yamamoto M."/>
            <person name="Fukamachi H."/>
            <person name="Nagai H."/>
            <person name="Kawakami T."/>
        </authorList>
    </citation>
    <scope>BIOTECHNOLOGY</scope>
</reference>
<reference key="6">
    <citation type="journal article" date="2014" name="J. Basic Microbiol.">
        <title>Differential antibacterial properties of the MurA inhibitors terreic acid and fosfomycin.</title>
        <authorList>
            <person name="Olesen S.H."/>
            <person name="Ingles D.J."/>
            <person name="Yang Y."/>
            <person name="Schoenbrunn E."/>
        </authorList>
    </citation>
    <scope>BIOTECHNOLOGY</scope>
</reference>
<reference key="7">
    <citation type="journal article" date="2014" name="J. Biotechnol.">
        <title>Culture-based and sequence-based insights into biosynthesis of secondary metabolites by Aspergillus terreus ATCC 20542.</title>
        <authorList>
            <person name="Boruta T."/>
            <person name="Bizukojc M."/>
        </authorList>
    </citation>
    <scope>FUNCTION</scope>
</reference>
<reference key="8">
    <citation type="journal article" date="2014" name="Org. Lett.">
        <title>Molecular genetic characterization of terreic acid pathway in Aspergillus terreus.</title>
        <authorList>
            <person name="Guo C.J."/>
            <person name="Sun W.W."/>
            <person name="Bruno K.S."/>
            <person name="Wang C.C."/>
        </authorList>
    </citation>
    <scope>FUNCTION</scope>
    <scope>DISRUPTION PHENOTYPE</scope>
</reference>
<gene>
    <name evidence="11" type="primary">atA</name>
    <name type="ORF">ATEG_06272</name>
</gene>
<dbReference type="EC" id="1.14.99.-" evidence="8"/>
<dbReference type="EMBL" id="KY950680">
    <property type="protein sequence ID" value="AUZ97937.1"/>
    <property type="molecule type" value="mRNA"/>
</dbReference>
<dbReference type="EMBL" id="CH476602">
    <property type="protein sequence ID" value="EAU32816.1"/>
    <property type="status" value="ALT_SEQ"/>
    <property type="molecule type" value="Genomic_DNA"/>
</dbReference>
<dbReference type="RefSeq" id="XP_001215450.1">
    <property type="nucleotide sequence ID" value="XM_001215450.1"/>
</dbReference>
<dbReference type="SMR" id="Q0CJ62"/>
<dbReference type="STRING" id="341663.Q0CJ62"/>
<dbReference type="GlyCosmos" id="Q0CJ62">
    <property type="glycosylation" value="1 site, No reported glycans"/>
</dbReference>
<dbReference type="EnsemblFungi" id="EAU32816">
    <property type="protein sequence ID" value="EAU32816"/>
    <property type="gene ID" value="ATEG_06272"/>
</dbReference>
<dbReference type="GeneID" id="4322129"/>
<dbReference type="VEuPathDB" id="FungiDB:ATEG_06272"/>
<dbReference type="eggNOG" id="KOG2614">
    <property type="taxonomic scope" value="Eukaryota"/>
</dbReference>
<dbReference type="HOGENOM" id="CLU_009665_6_3_1"/>
<dbReference type="OMA" id="GQQTVHR"/>
<dbReference type="OrthoDB" id="417877at2759"/>
<dbReference type="Proteomes" id="UP000007963">
    <property type="component" value="Unassembled WGS sequence"/>
</dbReference>
<dbReference type="GO" id="GO:0016020">
    <property type="term" value="C:membrane"/>
    <property type="evidence" value="ECO:0007669"/>
    <property type="project" value="UniProtKB-SubCell"/>
</dbReference>
<dbReference type="GO" id="GO:0071949">
    <property type="term" value="F:FAD binding"/>
    <property type="evidence" value="ECO:0007669"/>
    <property type="project" value="InterPro"/>
</dbReference>
<dbReference type="GO" id="GO:0004497">
    <property type="term" value="F:monooxygenase activity"/>
    <property type="evidence" value="ECO:0007669"/>
    <property type="project" value="UniProtKB-KW"/>
</dbReference>
<dbReference type="GO" id="GO:0044550">
    <property type="term" value="P:secondary metabolite biosynthetic process"/>
    <property type="evidence" value="ECO:0007669"/>
    <property type="project" value="TreeGrafter"/>
</dbReference>
<dbReference type="Gene3D" id="3.50.50.60">
    <property type="entry name" value="FAD/NAD(P)-binding domain"/>
    <property type="match status" value="1"/>
</dbReference>
<dbReference type="InterPro" id="IPR002938">
    <property type="entry name" value="FAD-bd"/>
</dbReference>
<dbReference type="InterPro" id="IPR036188">
    <property type="entry name" value="FAD/NAD-bd_sf"/>
</dbReference>
<dbReference type="InterPro" id="IPR051104">
    <property type="entry name" value="FAD_monoxygenase"/>
</dbReference>
<dbReference type="PANTHER" id="PTHR46720:SF3">
    <property type="entry name" value="FAD-BINDING DOMAIN-CONTAINING PROTEIN-RELATED"/>
    <property type="match status" value="1"/>
</dbReference>
<dbReference type="PANTHER" id="PTHR46720">
    <property type="entry name" value="HYDROXYLASE, PUTATIVE (AFU_ORTHOLOGUE AFUA_3G01460)-RELATED"/>
    <property type="match status" value="1"/>
</dbReference>
<dbReference type="Pfam" id="PF01494">
    <property type="entry name" value="FAD_binding_3"/>
    <property type="match status" value="1"/>
</dbReference>
<dbReference type="PRINTS" id="PR00420">
    <property type="entry name" value="RNGMNOXGNASE"/>
</dbReference>
<dbReference type="SUPFAM" id="SSF54373">
    <property type="entry name" value="FAD-linked reductases, C-terminal domain"/>
    <property type="match status" value="1"/>
</dbReference>
<dbReference type="SUPFAM" id="SSF51905">
    <property type="entry name" value="FAD/NAD(P)-binding domain"/>
    <property type="match status" value="1"/>
</dbReference>
<comment type="function">
    <text evidence="6 7 8 9 10">6-methylsalicylate 1-monooxygenase; part of the gene cluster that mediates the biosynthesis of terreic acid, a quinone epoxide inhibitor of Bruton's tyrosine kinase (PubMed:24534845, PubMed:25265334, PubMed:29391515). The first step of the pathway is the synthesis of 6-methylsalicylic acid (6-MSA) by the 6-methylsalicylic acid synthase atX (PubMed:25265334, PubMed:29391515, PubMed:9003280, PubMed:9438344). In the biosynthesis of 6-MSA, atX utilizes one acetyl-CoA and three malonyl-CoAs as its substrates and catalyzes a series of programmed reactions including Claisen condensation, reduction, aldol cyclization, and the hydrolytic cleavage that yields 6-MSA (PubMed:25265334, PubMed:9003280, PubMed:9438344). The 6-methylsalicylate 1-monooxygenase atA then catalyzes the decarboxylative hydroxylation of 6-MSA to 3-methylcatechol (PubMed:25265334, PubMed:29391515). The next step is the conversion of 3-methylcatechol to 3-methyl-1,2,4-benzenetriol by cytochrome P450 monooxygenase atE, which is enhanced by cytochrome P450 monooxygenase atG (PubMed:25265334, PubMed:29391515). Then, the epoxidase atD catalyzes the epoxidation and hydroxyl oxidation of 3-methyl-1,2,4-benzenetriol to terremutin (PubMed:29391515). Lastly, GMC oxidoreductase atC oxidizes terremutin to terreic acid (PubMed:25265334, PubMed:29391515).</text>
</comment>
<comment type="catalytic activity">
    <reaction evidence="8">
        <text>6-methylsalicylate + AH2 + O2 + H(+) = 3-methylcatechol + A + CO2 + H2O</text>
        <dbReference type="Rhea" id="RHEA:84147"/>
        <dbReference type="ChEBI" id="CHEBI:13193"/>
        <dbReference type="ChEBI" id="CHEBI:15377"/>
        <dbReference type="ChEBI" id="CHEBI:15378"/>
        <dbReference type="ChEBI" id="CHEBI:15379"/>
        <dbReference type="ChEBI" id="CHEBI:16526"/>
        <dbReference type="ChEBI" id="CHEBI:17499"/>
        <dbReference type="ChEBI" id="CHEBI:18404"/>
        <dbReference type="ChEBI" id="CHEBI:36658"/>
    </reaction>
    <physiologicalReaction direction="left-to-right" evidence="8">
        <dbReference type="Rhea" id="RHEA:84148"/>
    </physiologicalReaction>
</comment>
<comment type="cofactor">
    <cofactor evidence="13">
        <name>FAD</name>
        <dbReference type="ChEBI" id="CHEBI:57692"/>
    </cofactor>
</comment>
<comment type="pathway">
    <text evidence="7 8">Secondary metabolite biosynthesis.</text>
</comment>
<comment type="subcellular location">
    <subcellularLocation>
        <location evidence="2">Membrane</location>
        <topology evidence="2">Single-pass membrane protein</topology>
    </subcellularLocation>
</comment>
<comment type="disruption phenotype">
    <text evidence="7">Abolishes the production of terreic acid, but accumulates 6-methylsalicylic acid.</text>
</comment>
<comment type="biotechnology">
    <text evidence="4 5">Terreic acid is a metabolite with antibiotic properties (PubMed:23686727). Terreic acid also acts as a selective inhibitor of human BTK kinase in mast cells and other immune cells (PubMed:10051623).</text>
</comment>
<comment type="similarity">
    <text evidence="13">Belongs to the paxM FAD-dependent monooxygenase family.</text>
</comment>
<comment type="sequence caution" evidence="13">
    <conflict type="erroneous gene model prediction">
        <sequence resource="EMBL-CDS" id="EAU32816"/>
    </conflict>
</comment>
<feature type="chain" id="PRO_0000437636" description="6-methylsalicylate 1-monooxygenase atA">
    <location>
        <begin position="1"/>
        <end position="446"/>
    </location>
</feature>
<feature type="transmembrane region" description="Helical" evidence="2">
    <location>
        <begin position="7"/>
        <end position="27"/>
    </location>
</feature>
<feature type="active site" evidence="1">
    <location>
        <position position="200"/>
    </location>
</feature>
<feature type="binding site" evidence="1">
    <location>
        <position position="37"/>
    </location>
    <ligand>
        <name>FAD</name>
        <dbReference type="ChEBI" id="CHEBI:57692"/>
    </ligand>
</feature>
<feature type="binding site" evidence="1">
    <location>
        <position position="50"/>
    </location>
    <ligand>
        <name>FAD</name>
        <dbReference type="ChEBI" id="CHEBI:57692"/>
    </ligand>
</feature>
<feature type="binding site" evidence="1">
    <location>
        <position position="116"/>
    </location>
    <ligand>
        <name>FAD</name>
        <dbReference type="ChEBI" id="CHEBI:57692"/>
    </ligand>
</feature>
<feature type="binding site" evidence="1">
    <location>
        <position position="311"/>
    </location>
    <ligand>
        <name>FAD</name>
        <dbReference type="ChEBI" id="CHEBI:57692"/>
    </ligand>
</feature>
<feature type="binding site" evidence="1">
    <location>
        <position position="324"/>
    </location>
    <ligand>
        <name>FAD</name>
        <dbReference type="ChEBI" id="CHEBI:57692"/>
    </ligand>
</feature>
<feature type="glycosylation site" description="N-linked (GlcNAc...) asparagine" evidence="3">
    <location>
        <position position="107"/>
    </location>
</feature>
<name>ATA_ASPTN</name>
<sequence length="446" mass="48938">MTFSNRVSVAIIGGGIGGLSLAIGLLQNKNLDVAIYETAPKFAEIGAGVALGPNAQHALALISPAAEHAFRIHATTSLSPEFEHVWFDFRNGNAGEKDGEVLSKVENETGQQTVHRAKFLDELVKLIPREIAHFGKRLIHIQKDPVSGGAQYKLFFEDGTTASADCVIGADGIHSSVRKHLLGESHPAATPVFTGTVVYRGLIPMDVARDAIGEFADNSYMWCGDGGMVMTYPIDHGETLNVVGTRNDKGRWDGPPYTRPVDEETVRNDFMGWGEIPSKVIQLLKQPTMWAILDHYPAPYYYSGNVAIMGDAAHATTPFQGAGAGQAIEDALVLSTLFQRVTHSGLVRPALAAYNNVRLRRTQKVVATSRDALRLFCFNDRYVDGDAQRWREVWNGRMDWLWGMDLEKQNRDAVNLFADIVEKQSSARETMPKFGPVPFPVATSTV</sequence>
<protein>
    <recommendedName>
        <fullName evidence="14">6-methylsalicylate 1-monooxygenase atA</fullName>
        <ecNumber evidence="8">1.14.99.-</ecNumber>
    </recommendedName>
    <alternativeName>
        <fullName evidence="13">6-methylsalicylate hydrolase</fullName>
    </alternativeName>
    <alternativeName>
        <fullName evidence="13">FAD-dependent monooxygenase atA</fullName>
    </alternativeName>
    <alternativeName>
        <fullName evidence="11">Terreic acid biosynthesis cluster protein A</fullName>
    </alternativeName>
</protein>
<organism>
    <name type="scientific">Aspergillus terreus (strain NIH 2624 / FGSC A1156)</name>
    <dbReference type="NCBI Taxonomy" id="341663"/>
    <lineage>
        <taxon>Eukaryota</taxon>
        <taxon>Fungi</taxon>
        <taxon>Dikarya</taxon>
        <taxon>Ascomycota</taxon>
        <taxon>Pezizomycotina</taxon>
        <taxon>Eurotiomycetes</taxon>
        <taxon>Eurotiomycetidae</taxon>
        <taxon>Eurotiales</taxon>
        <taxon>Aspergillaceae</taxon>
        <taxon>Aspergillus</taxon>
        <taxon>Aspergillus subgen. Circumdati</taxon>
    </lineage>
</organism>
<keyword id="KW-0274">FAD</keyword>
<keyword id="KW-0285">Flavoprotein</keyword>
<keyword id="KW-0325">Glycoprotein</keyword>
<keyword id="KW-0472">Membrane</keyword>
<keyword id="KW-0503">Monooxygenase</keyword>
<keyword id="KW-0560">Oxidoreductase</keyword>
<keyword id="KW-1185">Reference proteome</keyword>
<keyword id="KW-0812">Transmembrane</keyword>
<keyword id="KW-1133">Transmembrane helix</keyword>
<evidence type="ECO:0000250" key="1">
    <source>
        <dbReference type="UniProtKB" id="B8M9J8"/>
    </source>
</evidence>
<evidence type="ECO:0000255" key="2"/>
<evidence type="ECO:0000255" key="3">
    <source>
        <dbReference type="PROSITE-ProRule" id="PRU00498"/>
    </source>
</evidence>
<evidence type="ECO:0000269" key="4">
    <source>
    </source>
</evidence>
<evidence type="ECO:0000269" key="5">
    <source>
    </source>
</evidence>
<evidence type="ECO:0000269" key="6">
    <source>
    </source>
</evidence>
<evidence type="ECO:0000269" key="7">
    <source>
    </source>
</evidence>
<evidence type="ECO:0000269" key="8">
    <source>
    </source>
</evidence>
<evidence type="ECO:0000269" key="9">
    <source>
    </source>
</evidence>
<evidence type="ECO:0000269" key="10">
    <source>
    </source>
</evidence>
<evidence type="ECO:0000303" key="11">
    <source>
    </source>
</evidence>
<evidence type="ECO:0000303" key="12">
    <source>
    </source>
</evidence>
<evidence type="ECO:0000305" key="13"/>
<evidence type="ECO:0000305" key="14">
    <source>
    </source>
</evidence>